<keyword id="KW-0800">Toxin</keyword>
<evidence type="ECO:0000250" key="1">
    <source>
        <dbReference type="UniProtKB" id="A0A067SLB9"/>
    </source>
</evidence>
<evidence type="ECO:0000269" key="2">
    <source>
    </source>
</evidence>
<evidence type="ECO:0000303" key="3">
    <source>
    </source>
</evidence>
<evidence type="ECO:0000305" key="4"/>
<evidence type="ECO:0000305" key="5">
    <source>
    </source>
</evidence>
<evidence type="ECO:0000305" key="6">
    <source ref="2"/>
</evidence>
<name>AMAN1_AMAEX</name>
<accession>U5L3J5</accession>
<dbReference type="EMBL" id="KF387479">
    <property type="protein sequence ID" value="AGW83703.1"/>
    <property type="molecule type" value="mRNA"/>
</dbReference>
<dbReference type="GO" id="GO:0090729">
    <property type="term" value="F:toxin activity"/>
    <property type="evidence" value="ECO:0007669"/>
    <property type="project" value="UniProtKB-KW"/>
</dbReference>
<dbReference type="InterPro" id="IPR027582">
    <property type="entry name" value="Amanitin/phalloidin"/>
</dbReference>
<dbReference type="NCBIfam" id="TIGR04309">
    <property type="entry name" value="amanitin"/>
    <property type="match status" value="1"/>
</dbReference>
<feature type="propeptide" id="PRO_0000443746" evidence="5">
    <location>
        <begin position="1"/>
        <end position="10"/>
    </location>
</feature>
<feature type="peptide" id="PRO_0000443747" description="Amanexitide 1" evidence="5">
    <location>
        <begin position="11"/>
        <end position="19"/>
    </location>
</feature>
<feature type="propeptide" id="PRO_0000443748" evidence="5">
    <location>
        <begin position="20"/>
        <end position="36"/>
    </location>
</feature>
<feature type="cross-link" description="Cyclopeptide (Val-Pro)" evidence="5">
    <location>
        <begin position="11"/>
        <end position="19"/>
    </location>
</feature>
<sequence length="36" mass="3987">MSDINTARLPVFSLPVFFPFVSDDIQAVLTRGESLC</sequence>
<comment type="function">
    <text evidence="5">Cyclic nonapeptide that belongs to the MSDIN-like toxin family responsible for a large number of food poisoning cases and deaths (PubMed:24050899).</text>
</comment>
<comment type="tissue specificity">
    <text evidence="2">Expressed in basidiocarps (PubMed:24050899).</text>
</comment>
<comment type="PTM">
    <text evidence="1">Processed by the macrocyclase-peptidase enzyme POPB to yield a toxic cyclic nonapeptide (By similarity). POPB first removes 10 residues from the N-terminus (By similarity). Conformational trapping of the remaining peptide forces the enzyme to release this intermediate rather than proceed to macrocyclization (By similarity). The enzyme rebinds the remaining peptide in a different conformation and catalyzes macrocyclization of the N-terminal 9 residues (By similarity).</text>
</comment>
<comment type="biotechnology">
    <text evidence="6">Amanexitides have a structure closely related to antamanide, a cyclic decapeptide with antidote activity against amatoxins and phallotoxins, and might therefore exhibit the same activity (Ref.2).</text>
</comment>
<comment type="similarity">
    <text evidence="4">Belongs to the MSDIN fungal toxin family.</text>
</comment>
<organism>
    <name type="scientific">Amanita exitialis</name>
    <name type="common">Guangzhou destroying angel</name>
    <dbReference type="NCBI Taxonomy" id="262245"/>
    <lineage>
        <taxon>Eukaryota</taxon>
        <taxon>Fungi</taxon>
        <taxon>Dikarya</taxon>
        <taxon>Basidiomycota</taxon>
        <taxon>Agaricomycotina</taxon>
        <taxon>Agaricomycetes</taxon>
        <taxon>Agaricomycetidae</taxon>
        <taxon>Agaricales</taxon>
        <taxon>Pluteineae</taxon>
        <taxon>Amanitaceae</taxon>
        <taxon>Amanita</taxon>
    </lineage>
</organism>
<protein>
    <recommendedName>
        <fullName evidence="3">Amanexitide proprotein 1</fullName>
    </recommendedName>
    <component>
        <recommendedName>
            <fullName evidence="3">Amanexitide 1</fullName>
        </recommendedName>
    </component>
</protein>
<reference key="1">
    <citation type="journal article" date="2013" name="Gene">
        <title>Illumina-based de novo transcriptome sequencing and analysis of Amanita exitialis basidiocarps.</title>
        <authorList>
            <person name="Li P."/>
            <person name="Deng W.Q."/>
            <person name="Li T.H."/>
            <person name="Song B."/>
            <person name="Shen Y.H."/>
        </authorList>
    </citation>
    <scope>NUCLEOTIDE SEQUENCE [MRNA]</scope>
    <scope>FUNCTION</scope>
    <scope>TISSUE SPECIFICITY</scope>
</reference>
<reference key="2">
    <citation type="journal article" date="2011" name="Nat. Prod. Bioprospect.">
        <title>Cyclopeptides from Amanita exitialis.</title>
        <authorList>
            <person name="Xue J.H."/>
            <person name="Wu P."/>
            <person name="Chi Y.L."/>
            <person name="Xu L.X."/>
            <person name="Wei X.Y."/>
        </authorList>
    </citation>
    <scope>BIOTECHNOLOGY</scope>
</reference>
<proteinExistence type="evidence at transcript level"/>